<keyword id="KW-0210">Decarboxylase</keyword>
<keyword id="KW-0456">Lyase</keyword>
<keyword id="KW-0460">Magnesium</keyword>
<keyword id="KW-0479">Metal-binding</keyword>
<keyword id="KW-1185">Reference proteome</keyword>
<keyword id="KW-0786">Thiamine pyrophosphate</keyword>
<organism>
    <name type="scientific">Oryza sativa subsp. indica</name>
    <name type="common">Rice</name>
    <dbReference type="NCBI Taxonomy" id="39946"/>
    <lineage>
        <taxon>Eukaryota</taxon>
        <taxon>Viridiplantae</taxon>
        <taxon>Streptophyta</taxon>
        <taxon>Embryophyta</taxon>
        <taxon>Tracheophyta</taxon>
        <taxon>Spermatophyta</taxon>
        <taxon>Magnoliopsida</taxon>
        <taxon>Liliopsida</taxon>
        <taxon>Poales</taxon>
        <taxon>Poaceae</taxon>
        <taxon>BOP clade</taxon>
        <taxon>Oryzoideae</taxon>
        <taxon>Oryzeae</taxon>
        <taxon>Oryzinae</taxon>
        <taxon>Oryza</taxon>
        <taxon>Oryza sativa</taxon>
    </lineage>
</organism>
<name>PDC2_ORYSI</name>
<protein>
    <recommendedName>
        <fullName>Pyruvate decarboxylase 2</fullName>
        <shortName>PDC</shortName>
        <ecNumber>4.1.1.1</ecNumber>
    </recommendedName>
</protein>
<feature type="chain" id="PRO_0000303668" description="Pyruvate decarboxylase 2">
    <location>
        <begin position="1"/>
        <end position="606"/>
    </location>
</feature>
<feature type="region of interest" description="Thiamine pyrophosphate binding">
    <location>
        <begin position="433"/>
        <end position="515"/>
    </location>
</feature>
<feature type="binding site" evidence="1">
    <location>
        <position position="68"/>
    </location>
    <ligand>
        <name>substrate</name>
    </ligand>
</feature>
<feature type="binding site" evidence="1">
    <location>
        <position position="155"/>
    </location>
    <ligand>
        <name>substrate</name>
    </ligand>
</feature>
<feature type="binding site" evidence="1">
    <location>
        <position position="483"/>
    </location>
    <ligand>
        <name>Mg(2+)</name>
        <dbReference type="ChEBI" id="CHEBI:18420"/>
    </ligand>
</feature>
<feature type="binding site" evidence="1">
    <location>
        <position position="510"/>
    </location>
    <ligand>
        <name>Mg(2+)</name>
        <dbReference type="ChEBI" id="CHEBI:18420"/>
    </ligand>
</feature>
<feature type="binding site" evidence="1">
    <location>
        <position position="512"/>
    </location>
    <ligand>
        <name>Mg(2+)</name>
        <dbReference type="ChEBI" id="CHEBI:18420"/>
    </ligand>
</feature>
<feature type="binding site" evidence="1">
    <location>
        <position position="516"/>
    </location>
    <ligand>
        <name>substrate</name>
    </ligand>
</feature>
<gene>
    <name type="primary">PDC2</name>
    <name type="ORF">OsI_010826</name>
</gene>
<sequence>METHIGSVDGAAAAADNGAVGCPASAVGCPMTSARPAPVSAGEASLGRHLARRLVQVGVSDVFAVPGDFNLTLLDHLIAEPGLRLVGCCNELNAGYAADGYARARGVGACAVTFTVGGLSVLNAIAGAYSENLPVICIAGGPNSNDYGTNRILHHTIGLPDFSQELRCFQTVTCHQAVVTNLEDAHEQIDTAIATALRESKPVYLSISCNLPGLPHPTFSRDPVPFFLAPRLSNKMGLEAAVEATVEFLNKAVKPVLVGGPKLRVAKAGKAFVDLVDASGYAYAVMPSAKGLVPETHPHFIGTYWGAVSTAFCAEIVESADAYLFAGPIFNDYSSVGYSFLLKKDKAIIVQPERVIVGNGPAFGCVMMKEFLSELAKRVNKNTTAYENYKRIFVPEGQPLESEPNEPLRVNVLFKHVQKMLNSDSAVIAETGDSWFNCQKLKLPEGCGYEFQMQYGSIGWSVGALLGYAQGAKDKRVIACIGDGSFQVTAQDVSTMIRCAQNSIIFLINNGGYTIEVEIHDGPYNVIKNWNYTGLVDAIHNGEGKCWTSKVKCEEELTEAIGMALGEKKDCLCFIEVIAHKDDTSKELLEWGSRVSAANSRPPNPQ</sequence>
<comment type="catalytic activity">
    <reaction>
        <text>a 2-oxocarboxylate + H(+) = an aldehyde + CO2</text>
        <dbReference type="Rhea" id="RHEA:11628"/>
        <dbReference type="ChEBI" id="CHEBI:15378"/>
        <dbReference type="ChEBI" id="CHEBI:16526"/>
        <dbReference type="ChEBI" id="CHEBI:17478"/>
        <dbReference type="ChEBI" id="CHEBI:35179"/>
        <dbReference type="EC" id="4.1.1.1"/>
    </reaction>
</comment>
<comment type="cofactor">
    <cofactor>
        <name>a metal cation</name>
        <dbReference type="ChEBI" id="CHEBI:25213"/>
    </cofactor>
    <text>Binds 1 metal ion per subunit.</text>
</comment>
<comment type="cofactor">
    <cofactor>
        <name>thiamine diphosphate</name>
        <dbReference type="ChEBI" id="CHEBI:58937"/>
    </cofactor>
    <text>Binds 1 thiamine pyrophosphate per subunit.</text>
</comment>
<comment type="subunit">
    <text evidence="2">Homotetramer.</text>
</comment>
<comment type="similarity">
    <text evidence="2">Belongs to the TPP enzyme family.</text>
</comment>
<comment type="sequence caution" evidence="2">
    <conflict type="frameshift">
        <sequence resource="EMBL-CDS" id="AAA90948"/>
    </conflict>
</comment>
<comment type="sequence caution" evidence="2">
    <conflict type="miscellaneous discrepancy">
        <sequence resource="EMBL-CDS" id="AAA90948"/>
    </conflict>
    <text>Sequencing errors.</text>
</comment>
<comment type="sequence caution" evidence="2">
    <conflict type="frameshift">
        <sequence resource="EMBL-CDS" id="AAB40530"/>
    </conflict>
</comment>
<comment type="sequence caution" evidence="2">
    <conflict type="miscellaneous discrepancy">
        <sequence resource="EMBL-CDS" id="AAB40530"/>
    </conflict>
    <text>Sequencing errors.</text>
</comment>
<accession>A2XFI3</accession>
<accession>P51848</accession>
<reference key="1">
    <citation type="online journal article" date="1995" name="Plant Gene Register">
        <title>Cloning and sequencing of a cDNA encoding pyruvate decarboxylase 2 gene from rice.</title>
        <authorList>
            <person name="Huq M.E."/>
            <person name="Hossain M.A."/>
            <person name="Hodges T.K."/>
        </authorList>
        <locator>PGR95-072</locator>
    </citation>
    <scope>NUCLEOTIDE SEQUENCE [GENOMIC DNA / MRNA]</scope>
    <source>
        <strain>cv. IR54</strain>
        <tissue>Callus</tissue>
    </source>
</reference>
<reference key="2">
    <citation type="journal article" date="2005" name="PLoS Biol.">
        <title>The genomes of Oryza sativa: a history of duplications.</title>
        <authorList>
            <person name="Yu J."/>
            <person name="Wang J."/>
            <person name="Lin W."/>
            <person name="Li S."/>
            <person name="Li H."/>
            <person name="Zhou J."/>
            <person name="Ni P."/>
            <person name="Dong W."/>
            <person name="Hu S."/>
            <person name="Zeng C."/>
            <person name="Zhang J."/>
            <person name="Zhang Y."/>
            <person name="Li R."/>
            <person name="Xu Z."/>
            <person name="Li S."/>
            <person name="Li X."/>
            <person name="Zheng H."/>
            <person name="Cong L."/>
            <person name="Lin L."/>
            <person name="Yin J."/>
            <person name="Geng J."/>
            <person name="Li G."/>
            <person name="Shi J."/>
            <person name="Liu J."/>
            <person name="Lv H."/>
            <person name="Li J."/>
            <person name="Wang J."/>
            <person name="Deng Y."/>
            <person name="Ran L."/>
            <person name="Shi X."/>
            <person name="Wang X."/>
            <person name="Wu Q."/>
            <person name="Li C."/>
            <person name="Ren X."/>
            <person name="Wang J."/>
            <person name="Wang X."/>
            <person name="Li D."/>
            <person name="Liu D."/>
            <person name="Zhang X."/>
            <person name="Ji Z."/>
            <person name="Zhao W."/>
            <person name="Sun Y."/>
            <person name="Zhang Z."/>
            <person name="Bao J."/>
            <person name="Han Y."/>
            <person name="Dong L."/>
            <person name="Ji J."/>
            <person name="Chen P."/>
            <person name="Wu S."/>
            <person name="Liu J."/>
            <person name="Xiao Y."/>
            <person name="Bu D."/>
            <person name="Tan J."/>
            <person name="Yang L."/>
            <person name="Ye C."/>
            <person name="Zhang J."/>
            <person name="Xu J."/>
            <person name="Zhou Y."/>
            <person name="Yu Y."/>
            <person name="Zhang B."/>
            <person name="Zhuang S."/>
            <person name="Wei H."/>
            <person name="Liu B."/>
            <person name="Lei M."/>
            <person name="Yu H."/>
            <person name="Li Y."/>
            <person name="Xu H."/>
            <person name="Wei S."/>
            <person name="He X."/>
            <person name="Fang L."/>
            <person name="Zhang Z."/>
            <person name="Zhang Y."/>
            <person name="Huang X."/>
            <person name="Su Z."/>
            <person name="Tong W."/>
            <person name="Li J."/>
            <person name="Tong Z."/>
            <person name="Li S."/>
            <person name="Ye J."/>
            <person name="Wang L."/>
            <person name="Fang L."/>
            <person name="Lei T."/>
            <person name="Chen C.-S."/>
            <person name="Chen H.-C."/>
            <person name="Xu Z."/>
            <person name="Li H."/>
            <person name="Huang H."/>
            <person name="Zhang F."/>
            <person name="Xu H."/>
            <person name="Li N."/>
            <person name="Zhao C."/>
            <person name="Li S."/>
            <person name="Dong L."/>
            <person name="Huang Y."/>
            <person name="Li L."/>
            <person name="Xi Y."/>
            <person name="Qi Q."/>
            <person name="Li W."/>
            <person name="Zhang B."/>
            <person name="Hu W."/>
            <person name="Zhang Y."/>
            <person name="Tian X."/>
            <person name="Jiao Y."/>
            <person name="Liang X."/>
            <person name="Jin J."/>
            <person name="Gao L."/>
            <person name="Zheng W."/>
            <person name="Hao B."/>
            <person name="Liu S.-M."/>
            <person name="Wang W."/>
            <person name="Yuan L."/>
            <person name="Cao M."/>
            <person name="McDermott J."/>
            <person name="Samudrala R."/>
            <person name="Wang J."/>
            <person name="Wong G.K.-S."/>
            <person name="Yang H."/>
        </authorList>
    </citation>
    <scope>NUCLEOTIDE SEQUENCE [LARGE SCALE GENOMIC DNA]</scope>
    <source>
        <strain>cv. 93-11</strain>
    </source>
</reference>
<proteinExistence type="evidence at transcript level"/>
<dbReference type="EC" id="4.1.1.1"/>
<dbReference type="EMBL" id="U27350">
    <property type="protein sequence ID" value="AAA90948.1"/>
    <property type="status" value="ALT_SEQ"/>
    <property type="molecule type" value="mRNA"/>
</dbReference>
<dbReference type="EMBL" id="U38199">
    <property type="protein sequence ID" value="AAB40530.1"/>
    <property type="status" value="ALT_SEQ"/>
    <property type="molecule type" value="Genomic_DNA"/>
</dbReference>
<dbReference type="EMBL" id="CM000128">
    <property type="status" value="NOT_ANNOTATED_CDS"/>
    <property type="molecule type" value="Genomic_DNA"/>
</dbReference>
<dbReference type="SMR" id="A2XFI3"/>
<dbReference type="STRING" id="39946.A2XFI3"/>
<dbReference type="EnsemblPlants" id="BGIOSGA010938-TA">
    <property type="protein sequence ID" value="BGIOSGA010938-PA"/>
    <property type="gene ID" value="BGIOSGA010938"/>
</dbReference>
<dbReference type="EnsemblPlants" id="OsGoSa_03g0013860.02">
    <property type="protein sequence ID" value="OsGoSa_03g0013860.02"/>
    <property type="gene ID" value="OsGoSa_03g0013860"/>
</dbReference>
<dbReference type="EnsemblPlants" id="OsIR64_03g0013560.01">
    <property type="protein sequence ID" value="OsIR64_03g0013560.01"/>
    <property type="gene ID" value="OsIR64_03g0013560"/>
</dbReference>
<dbReference type="EnsemblPlants" id="OsKYG_03g0013770.01">
    <property type="protein sequence ID" value="OsKYG_03g0013770.01"/>
    <property type="gene ID" value="OsKYG_03g0013770"/>
</dbReference>
<dbReference type="EnsemblPlants" id="OsLaMu_03g0013660.01">
    <property type="protein sequence ID" value="OsLaMu_03g0013660.01"/>
    <property type="gene ID" value="OsLaMu_03g0013660"/>
</dbReference>
<dbReference type="EnsemblPlants" id="OsLiXu_03g0013700.01">
    <property type="protein sequence ID" value="OsLiXu_03g0013700.01"/>
    <property type="gene ID" value="OsLiXu_03g0013700"/>
</dbReference>
<dbReference type="EnsemblPlants" id="OsMH63_03G013710_01">
    <property type="protein sequence ID" value="OsMH63_03G013710_01"/>
    <property type="gene ID" value="OsMH63_03G013710"/>
</dbReference>
<dbReference type="EnsemblPlants" id="OsPr106_03g0013660.01">
    <property type="protein sequence ID" value="OsPr106_03g0013660.01"/>
    <property type="gene ID" value="OsPr106_03g0013660"/>
</dbReference>
<dbReference type="EnsemblPlants" id="OsZS97_03G013640_01">
    <property type="protein sequence ID" value="OsZS97_03G013640_01"/>
    <property type="gene ID" value="OsZS97_03G013640"/>
</dbReference>
<dbReference type="Gramene" id="BGIOSGA010938-TA">
    <property type="protein sequence ID" value="BGIOSGA010938-PA"/>
    <property type="gene ID" value="BGIOSGA010938"/>
</dbReference>
<dbReference type="Gramene" id="OsGoSa_03g0013860.02">
    <property type="protein sequence ID" value="OsGoSa_03g0013860.02"/>
    <property type="gene ID" value="OsGoSa_03g0013860"/>
</dbReference>
<dbReference type="Gramene" id="OsIR64_03g0013560.01">
    <property type="protein sequence ID" value="OsIR64_03g0013560.01"/>
    <property type="gene ID" value="OsIR64_03g0013560"/>
</dbReference>
<dbReference type="Gramene" id="OsKYG_03g0013770.01">
    <property type="protein sequence ID" value="OsKYG_03g0013770.01"/>
    <property type="gene ID" value="OsKYG_03g0013770"/>
</dbReference>
<dbReference type="Gramene" id="OsLaMu_03g0013660.01">
    <property type="protein sequence ID" value="OsLaMu_03g0013660.01"/>
    <property type="gene ID" value="OsLaMu_03g0013660"/>
</dbReference>
<dbReference type="Gramene" id="OsLiXu_03g0013700.01">
    <property type="protein sequence ID" value="OsLiXu_03g0013700.01"/>
    <property type="gene ID" value="OsLiXu_03g0013700"/>
</dbReference>
<dbReference type="Gramene" id="OsMH63_03G013710_01">
    <property type="protein sequence ID" value="OsMH63_03G013710_01"/>
    <property type="gene ID" value="OsMH63_03G013710"/>
</dbReference>
<dbReference type="Gramene" id="OsPr106_03g0013660.01">
    <property type="protein sequence ID" value="OsPr106_03g0013660.01"/>
    <property type="gene ID" value="OsPr106_03g0013660"/>
</dbReference>
<dbReference type="Gramene" id="OsZS97_03G013640_01">
    <property type="protein sequence ID" value="OsZS97_03G013640_01"/>
    <property type="gene ID" value="OsZS97_03G013640"/>
</dbReference>
<dbReference type="HOGENOM" id="CLU_013748_0_2_1"/>
<dbReference type="OMA" id="IREHFHA"/>
<dbReference type="OrthoDB" id="3970464at2759"/>
<dbReference type="BRENDA" id="4.1.1.1">
    <property type="organism ID" value="4460"/>
</dbReference>
<dbReference type="SABIO-RK" id="A2XFI3"/>
<dbReference type="Proteomes" id="UP000007015">
    <property type="component" value="Chromosome 3"/>
</dbReference>
<dbReference type="ExpressionAtlas" id="A2XFI3">
    <property type="expression patterns" value="differential"/>
</dbReference>
<dbReference type="GO" id="GO:0005829">
    <property type="term" value="C:cytosol"/>
    <property type="evidence" value="ECO:0007669"/>
    <property type="project" value="TreeGrafter"/>
</dbReference>
<dbReference type="GO" id="GO:0000287">
    <property type="term" value="F:magnesium ion binding"/>
    <property type="evidence" value="ECO:0007669"/>
    <property type="project" value="InterPro"/>
</dbReference>
<dbReference type="GO" id="GO:0004737">
    <property type="term" value="F:pyruvate decarboxylase activity"/>
    <property type="evidence" value="ECO:0007669"/>
    <property type="project" value="UniProtKB-EC"/>
</dbReference>
<dbReference type="GO" id="GO:0030976">
    <property type="term" value="F:thiamine pyrophosphate binding"/>
    <property type="evidence" value="ECO:0007669"/>
    <property type="project" value="InterPro"/>
</dbReference>
<dbReference type="GO" id="GO:0000949">
    <property type="term" value="P:aromatic amino acid family catabolic process to alcohol via Ehrlich pathway"/>
    <property type="evidence" value="ECO:0007669"/>
    <property type="project" value="TreeGrafter"/>
</dbReference>
<dbReference type="CDD" id="cd02005">
    <property type="entry name" value="TPP_PDC_IPDC"/>
    <property type="match status" value="1"/>
</dbReference>
<dbReference type="CDD" id="cd07038">
    <property type="entry name" value="TPP_PYR_PDC_IPDC_like"/>
    <property type="match status" value="1"/>
</dbReference>
<dbReference type="FunFam" id="3.40.50.1220:FF:000009">
    <property type="entry name" value="Pyruvate decarboxylase 1"/>
    <property type="match status" value="1"/>
</dbReference>
<dbReference type="FunFam" id="3.40.50.970:FF:000021">
    <property type="entry name" value="Pyruvate decarboxylase 1"/>
    <property type="match status" value="1"/>
</dbReference>
<dbReference type="FunFam" id="3.40.50.970:FF:000017">
    <property type="entry name" value="pyruvate decarboxylase 1"/>
    <property type="match status" value="1"/>
</dbReference>
<dbReference type="Gene3D" id="3.40.50.970">
    <property type="match status" value="2"/>
</dbReference>
<dbReference type="Gene3D" id="3.40.50.1220">
    <property type="entry name" value="TPP-binding domain"/>
    <property type="match status" value="1"/>
</dbReference>
<dbReference type="InterPro" id="IPR029035">
    <property type="entry name" value="DHS-like_NAD/FAD-binding_dom"/>
</dbReference>
<dbReference type="InterPro" id="IPR012110">
    <property type="entry name" value="PDC/IPDC-like"/>
</dbReference>
<dbReference type="InterPro" id="IPR029061">
    <property type="entry name" value="THDP-binding"/>
</dbReference>
<dbReference type="InterPro" id="IPR012000">
    <property type="entry name" value="Thiamin_PyroP_enz_cen_dom"/>
</dbReference>
<dbReference type="InterPro" id="IPR012001">
    <property type="entry name" value="Thiamin_PyroP_enz_TPP-bd_dom"/>
</dbReference>
<dbReference type="InterPro" id="IPR011766">
    <property type="entry name" value="TPP_enzyme_TPP-bd"/>
</dbReference>
<dbReference type="InterPro" id="IPR047214">
    <property type="entry name" value="TPP_PDC_IPDC"/>
</dbReference>
<dbReference type="InterPro" id="IPR047213">
    <property type="entry name" value="TPP_PYR_PDC_IPDC-like"/>
</dbReference>
<dbReference type="PANTHER" id="PTHR43452">
    <property type="entry name" value="PYRUVATE DECARBOXYLASE"/>
    <property type="match status" value="1"/>
</dbReference>
<dbReference type="PANTHER" id="PTHR43452:SF39">
    <property type="entry name" value="PYRUVATE DECARBOXYLASE 2"/>
    <property type="match status" value="1"/>
</dbReference>
<dbReference type="Pfam" id="PF02775">
    <property type="entry name" value="TPP_enzyme_C"/>
    <property type="match status" value="1"/>
</dbReference>
<dbReference type="Pfam" id="PF00205">
    <property type="entry name" value="TPP_enzyme_M"/>
    <property type="match status" value="1"/>
</dbReference>
<dbReference type="Pfam" id="PF02776">
    <property type="entry name" value="TPP_enzyme_N"/>
    <property type="match status" value="1"/>
</dbReference>
<dbReference type="PIRSF" id="PIRSF036565">
    <property type="entry name" value="Pyruvt_ip_decrb"/>
    <property type="match status" value="1"/>
</dbReference>
<dbReference type="SUPFAM" id="SSF52467">
    <property type="entry name" value="DHS-like NAD/FAD-binding domain"/>
    <property type="match status" value="1"/>
</dbReference>
<dbReference type="SUPFAM" id="SSF52518">
    <property type="entry name" value="Thiamin diphosphate-binding fold (THDP-binding)"/>
    <property type="match status" value="2"/>
</dbReference>
<evidence type="ECO:0000250" key="1"/>
<evidence type="ECO:0000305" key="2"/>